<sequence>MNTATGFIVLLVLATVIGCISADFQGGFEPYEEEDAERIFRRSPTCIPTGQPCPYNENCCSQSCTYKTNENGNQVKGCD</sequence>
<accession>S0F204</accession>
<reference key="1">
    <citation type="journal article" date="2014" name="BMC Genomics">
        <title>Diversification of a single ancestral gene into a successful toxin superfamily in highly venomous Australian funnel-web spiders.</title>
        <authorList>
            <person name="Pineda S.S."/>
            <person name="Sollod B.L."/>
            <person name="Wilson D."/>
            <person name="Darling A."/>
            <person name="Sunagar K."/>
            <person name="Undheim E.A."/>
            <person name="Kely L."/>
            <person name="Antunes A."/>
            <person name="Fry B.G."/>
            <person name="King G.F."/>
        </authorList>
    </citation>
    <scope>NUCLEOTIDE SEQUENCE [MRNA]</scope>
    <source>
        <tissue>Venom gland</tissue>
    </source>
</reference>
<feature type="signal peptide" evidence="3">
    <location>
        <begin position="1"/>
        <end position="22"/>
    </location>
</feature>
<feature type="propeptide" id="PRO_0000430906" evidence="1">
    <location>
        <begin position="23"/>
        <end position="40"/>
    </location>
</feature>
<feature type="chain" id="PRO_0000430907" description="Omega-hexatoxin-Hi1f">
    <location>
        <begin position="43"/>
        <end position="79"/>
    </location>
</feature>
<feature type="site" description="Critical for insecticidal activity" evidence="2">
    <location>
        <position position="52"/>
    </location>
</feature>
<feature type="site" description="Critical for insecticidal activity" evidence="2">
    <location>
        <position position="69"/>
    </location>
</feature>
<feature type="disulfide bond" evidence="2">
    <location>
        <begin position="46"/>
        <end position="60"/>
    </location>
</feature>
<feature type="disulfide bond" evidence="2">
    <location>
        <begin position="53"/>
        <end position="64"/>
    </location>
</feature>
<feature type="disulfide bond" evidence="2">
    <location>
        <begin position="59"/>
        <end position="78"/>
    </location>
</feature>
<protein>
    <recommendedName>
        <fullName evidence="4">Omega-hexatoxin-Hi1f</fullName>
        <shortName evidence="5">Omega-HXTX-Hi1f</shortName>
    </recommendedName>
</protein>
<dbReference type="EMBL" id="HG001283">
    <property type="protein sequence ID" value="CDF44144.1"/>
    <property type="molecule type" value="mRNA"/>
</dbReference>
<dbReference type="SMR" id="S0F204"/>
<dbReference type="GO" id="GO:0005576">
    <property type="term" value="C:extracellular region"/>
    <property type="evidence" value="ECO:0007669"/>
    <property type="project" value="UniProtKB-SubCell"/>
</dbReference>
<dbReference type="GO" id="GO:0019855">
    <property type="term" value="F:calcium channel inhibitor activity"/>
    <property type="evidence" value="ECO:0007669"/>
    <property type="project" value="InterPro"/>
</dbReference>
<dbReference type="GO" id="GO:0090729">
    <property type="term" value="F:toxin activity"/>
    <property type="evidence" value="ECO:0007669"/>
    <property type="project" value="UniProtKB-KW"/>
</dbReference>
<dbReference type="GO" id="GO:0006952">
    <property type="term" value="P:defense response"/>
    <property type="evidence" value="ECO:0007669"/>
    <property type="project" value="InterPro"/>
</dbReference>
<dbReference type="InterPro" id="IPR009415">
    <property type="entry name" value="Omega-atracotox"/>
</dbReference>
<dbReference type="Pfam" id="PF06357">
    <property type="entry name" value="Omega-toxin"/>
    <property type="match status" value="1"/>
</dbReference>
<dbReference type="SUPFAM" id="SSF57059">
    <property type="entry name" value="omega toxin-like"/>
    <property type="match status" value="1"/>
</dbReference>
<name>TO1F_HADIN</name>
<comment type="function">
    <text evidence="2">Inhibits insect, but not mammalian, voltage-gated calcium channels (Cav).</text>
</comment>
<comment type="subcellular location">
    <subcellularLocation>
        <location evidence="5">Secreted</location>
    </subcellularLocation>
</comment>
<comment type="tissue specificity">
    <text evidence="5">Expressed by the venom gland.</text>
</comment>
<comment type="domain">
    <text evidence="1">The presence of a 'disulfide through disulfide knot' structurally defines this protein as a knottin.</text>
</comment>
<comment type="similarity">
    <text evidence="4">Belongs to the neurotoxin 08 (Shiva) family. 01 (omega toxin) subfamily.</text>
</comment>
<keyword id="KW-0108">Calcium channel impairing toxin</keyword>
<keyword id="KW-0165">Cleavage on pair of basic residues</keyword>
<keyword id="KW-1015">Disulfide bond</keyword>
<keyword id="KW-0872">Ion channel impairing toxin</keyword>
<keyword id="KW-0960">Knottin</keyword>
<keyword id="KW-0964">Secreted</keyword>
<keyword id="KW-0732">Signal</keyword>
<keyword id="KW-0800">Toxin</keyword>
<keyword id="KW-1218">Voltage-gated calcium channel impairing toxin</keyword>
<proteinExistence type="inferred from homology"/>
<organism>
    <name type="scientific">Hadronyche infensa</name>
    <name type="common">Fraser island funnel-web spider</name>
    <name type="synonym">Atrax infensus</name>
    <dbReference type="NCBI Taxonomy" id="153481"/>
    <lineage>
        <taxon>Eukaryota</taxon>
        <taxon>Metazoa</taxon>
        <taxon>Ecdysozoa</taxon>
        <taxon>Arthropoda</taxon>
        <taxon>Chelicerata</taxon>
        <taxon>Arachnida</taxon>
        <taxon>Araneae</taxon>
        <taxon>Mygalomorphae</taxon>
        <taxon>Hexathelidae</taxon>
        <taxon>Hadronyche</taxon>
    </lineage>
</organism>
<evidence type="ECO:0000250" key="1"/>
<evidence type="ECO:0000250" key="2">
    <source>
        <dbReference type="UniProtKB" id="P56207"/>
    </source>
</evidence>
<evidence type="ECO:0000255" key="3"/>
<evidence type="ECO:0000303" key="4">
    <source>
    </source>
</evidence>
<evidence type="ECO:0000305" key="5">
    <source>
    </source>
</evidence>